<feature type="chain" id="PRO_0000160740" description="Alcohol dehydrogenase, propanol-preferring">
    <location>
        <begin position="1"/>
        <end position="336"/>
    </location>
</feature>
<feature type="binding site" evidence="1">
    <location>
        <position position="37"/>
    </location>
    <ligand>
        <name>Zn(2+)</name>
        <dbReference type="ChEBI" id="CHEBI:29105"/>
        <label>1</label>
        <note>catalytic</note>
    </ligand>
</feature>
<feature type="binding site" evidence="1">
    <location>
        <position position="58"/>
    </location>
    <ligand>
        <name>Zn(2+)</name>
        <dbReference type="ChEBI" id="CHEBI:29105"/>
        <label>1</label>
        <note>catalytic</note>
    </ligand>
</feature>
<feature type="binding site" evidence="1">
    <location>
        <position position="89"/>
    </location>
    <ligand>
        <name>Zn(2+)</name>
        <dbReference type="ChEBI" id="CHEBI:29105"/>
        <label>2</label>
    </ligand>
</feature>
<feature type="binding site" evidence="1">
    <location>
        <position position="92"/>
    </location>
    <ligand>
        <name>Zn(2+)</name>
        <dbReference type="ChEBI" id="CHEBI:29105"/>
        <label>2</label>
    </ligand>
</feature>
<feature type="binding site" evidence="1">
    <location>
        <position position="95"/>
    </location>
    <ligand>
        <name>Zn(2+)</name>
        <dbReference type="ChEBI" id="CHEBI:29105"/>
        <label>2</label>
    </ligand>
</feature>
<feature type="binding site" evidence="1">
    <location>
        <position position="103"/>
    </location>
    <ligand>
        <name>Zn(2+)</name>
        <dbReference type="ChEBI" id="CHEBI:29105"/>
        <label>2</label>
    </ligand>
</feature>
<feature type="binding site" evidence="1">
    <location>
        <position position="145"/>
    </location>
    <ligand>
        <name>Zn(2+)</name>
        <dbReference type="ChEBI" id="CHEBI:29105"/>
        <label>1</label>
        <note>catalytic</note>
    </ligand>
</feature>
<feature type="sequence conflict" description="In Ref. 4; AA sequence." evidence="2" ref="4">
    <original>C</original>
    <variation>P</variation>
    <location>
        <position position="34"/>
    </location>
</feature>
<feature type="sequence conflict" description="In Ref. 5; M31532." evidence="2" ref="5">
    <original>G</original>
    <variation>R</variation>
    <location>
        <position position="90"/>
    </location>
</feature>
<feature type="sequence conflict" description="In Ref. 5; M31532." evidence="2" ref="5">
    <original>R</original>
    <variation>P</variation>
    <location>
        <position position="104"/>
    </location>
</feature>
<feature type="sequence conflict" description="In Ref. 5; M31532." evidence="2" ref="5">
    <original>N</original>
    <variation>K</variation>
    <location>
        <position position="108"/>
    </location>
</feature>
<feature type="sequence conflict" description="In Ref. 5; M31532." evidence="2" ref="5">
    <original>S</original>
    <variation>G</variation>
    <location>
        <position position="112"/>
    </location>
</feature>
<feature type="sequence conflict" description="In Ref. 5; M31532." evidence="2" ref="5">
    <original>MA</original>
    <variation>RV</variation>
    <location>
        <begin position="117"/>
        <end position="118"/>
    </location>
</feature>
<feature type="strand" evidence="3">
    <location>
        <begin position="2"/>
        <end position="6"/>
    </location>
</feature>
<feature type="strand" evidence="3">
    <location>
        <begin position="12"/>
        <end position="16"/>
    </location>
</feature>
<feature type="strand" evidence="3">
    <location>
        <begin position="26"/>
        <end position="35"/>
    </location>
</feature>
<feature type="helix" evidence="3">
    <location>
        <begin position="38"/>
        <end position="45"/>
    </location>
</feature>
<feature type="turn" evidence="3">
    <location>
        <begin position="46"/>
        <end position="48"/>
    </location>
</feature>
<feature type="strand" evidence="3">
    <location>
        <begin position="58"/>
        <end position="67"/>
    </location>
</feature>
<feature type="strand" evidence="3">
    <location>
        <begin position="79"/>
        <end position="87"/>
    </location>
</feature>
<feature type="strand" evidence="3">
    <location>
        <begin position="90"/>
        <end position="92"/>
    </location>
</feature>
<feature type="helix" evidence="3">
    <location>
        <begin position="95"/>
        <end position="97"/>
    </location>
</feature>
<feature type="helix" evidence="3">
    <location>
        <begin position="100"/>
        <end position="102"/>
    </location>
</feature>
<feature type="turn" evidence="3">
    <location>
        <begin position="109"/>
        <end position="111"/>
    </location>
</feature>
<feature type="strand" evidence="3">
    <location>
        <begin position="116"/>
        <end position="124"/>
    </location>
</feature>
<feature type="helix" evidence="3">
    <location>
        <begin position="125"/>
        <end position="127"/>
    </location>
</feature>
<feature type="helix" evidence="3">
    <location>
        <begin position="137"/>
        <end position="143"/>
    </location>
</feature>
<feature type="helix" evidence="3">
    <location>
        <begin position="146"/>
        <end position="156"/>
    </location>
</feature>
<feature type="strand" evidence="3">
    <location>
        <begin position="164"/>
        <end position="168"/>
    </location>
</feature>
<feature type="helix" evidence="3">
    <location>
        <begin position="172"/>
        <end position="183"/>
    </location>
</feature>
<feature type="strand" evidence="3">
    <location>
        <begin position="188"/>
        <end position="194"/>
    </location>
</feature>
<feature type="helix" evidence="3">
    <location>
        <begin position="196"/>
        <end position="204"/>
    </location>
</feature>
<feature type="strand" evidence="3">
    <location>
        <begin position="208"/>
        <end position="212"/>
    </location>
</feature>
<feature type="turn" evidence="3">
    <location>
        <begin position="213"/>
        <end position="215"/>
    </location>
</feature>
<feature type="helix" evidence="3">
    <location>
        <begin position="218"/>
        <end position="226"/>
    </location>
</feature>
<feature type="strand" evidence="3">
    <location>
        <begin position="227"/>
        <end position="234"/>
    </location>
</feature>
<feature type="helix" evidence="3">
    <location>
        <begin position="239"/>
        <end position="248"/>
    </location>
</feature>
<feature type="strand" evidence="3">
    <location>
        <begin position="249"/>
        <end position="257"/>
    </location>
</feature>
<feature type="strand" evidence="3">
    <location>
        <begin position="262"/>
        <end position="268"/>
    </location>
</feature>
<feature type="helix" evidence="3">
    <location>
        <begin position="269"/>
        <end position="274"/>
    </location>
</feature>
<feature type="strand" evidence="3">
    <location>
        <begin position="278"/>
        <end position="281"/>
    </location>
</feature>
<feature type="helix" evidence="3">
    <location>
        <begin position="287"/>
        <end position="298"/>
    </location>
</feature>
<feature type="strand" evidence="3">
    <location>
        <begin position="306"/>
        <end position="309"/>
    </location>
</feature>
<feature type="helix" evidence="3">
    <location>
        <begin position="311"/>
        <end position="313"/>
    </location>
</feature>
<feature type="helix" evidence="3">
    <location>
        <begin position="314"/>
        <end position="322"/>
    </location>
</feature>
<feature type="strand" evidence="3">
    <location>
        <begin position="327"/>
        <end position="333"/>
    </location>
</feature>
<proteinExistence type="evidence at protein level"/>
<accession>P39451</accession>
<accession>P76126</accession>
<accession>P78157</accession>
<accession>P78268</accession>
<dbReference type="EC" id="1.1.1.1"/>
<dbReference type="EMBL" id="U00096">
    <property type="protein sequence ID" value="AAC74551.2"/>
    <property type="molecule type" value="Genomic_DNA"/>
</dbReference>
<dbReference type="EMBL" id="AP009048">
    <property type="protein sequence ID" value="BAA15126.1"/>
    <property type="molecule type" value="Genomic_DNA"/>
</dbReference>
<dbReference type="EMBL" id="M31532">
    <property type="status" value="NOT_ANNOTATED_CDS"/>
    <property type="molecule type" value="Genomic_DNA"/>
</dbReference>
<dbReference type="PIR" id="A64901">
    <property type="entry name" value="A64901"/>
</dbReference>
<dbReference type="RefSeq" id="NP_415995.4">
    <property type="nucleotide sequence ID" value="NC_000913.3"/>
</dbReference>
<dbReference type="RefSeq" id="WP_000642433.1">
    <property type="nucleotide sequence ID" value="NZ_SSZK01000038.1"/>
</dbReference>
<dbReference type="PDB" id="4GKV">
    <property type="method" value="X-ray"/>
    <property type="resolution" value="2.01 A"/>
    <property type="chains" value="A/B/C/D=1-336"/>
</dbReference>
<dbReference type="PDBsum" id="4GKV"/>
<dbReference type="SMR" id="P39451"/>
<dbReference type="BioGRID" id="4262899">
    <property type="interactions" value="29"/>
</dbReference>
<dbReference type="FunCoup" id="P39451">
    <property type="interactions" value="278"/>
</dbReference>
<dbReference type="IntAct" id="P39451">
    <property type="interactions" value="5"/>
</dbReference>
<dbReference type="STRING" id="511145.b1478"/>
<dbReference type="jPOST" id="P39451"/>
<dbReference type="PaxDb" id="511145-b1478"/>
<dbReference type="EnsemblBacteria" id="AAC74551">
    <property type="protein sequence ID" value="AAC74551"/>
    <property type="gene ID" value="b1478"/>
</dbReference>
<dbReference type="GeneID" id="946036"/>
<dbReference type="KEGG" id="ecj:JW1474"/>
<dbReference type="KEGG" id="eco:b1478"/>
<dbReference type="KEGG" id="ecoc:C3026_08570"/>
<dbReference type="PATRIC" id="fig|1411691.4.peg.789"/>
<dbReference type="EchoBASE" id="EB2506"/>
<dbReference type="eggNOG" id="COG1064">
    <property type="taxonomic scope" value="Bacteria"/>
</dbReference>
<dbReference type="HOGENOM" id="CLU_026673_20_1_6"/>
<dbReference type="InParanoid" id="P39451"/>
<dbReference type="OMA" id="YKGLKMT"/>
<dbReference type="OrthoDB" id="9771084at2"/>
<dbReference type="PhylomeDB" id="P39451"/>
<dbReference type="BioCyc" id="EcoCyc:ADHP-MONOMER"/>
<dbReference type="BioCyc" id="MetaCyc:ADHP-MONOMER"/>
<dbReference type="EvolutionaryTrace" id="P39451"/>
<dbReference type="PRO" id="PR:P39451"/>
<dbReference type="Proteomes" id="UP000000625">
    <property type="component" value="Chromosome"/>
</dbReference>
<dbReference type="GO" id="GO:0004022">
    <property type="term" value="F:alcohol dehydrogenase (NAD+) activity"/>
    <property type="evidence" value="ECO:0000314"/>
    <property type="project" value="EcoCyc"/>
</dbReference>
<dbReference type="GO" id="GO:0008270">
    <property type="term" value="F:zinc ion binding"/>
    <property type="evidence" value="ECO:0000314"/>
    <property type="project" value="EcoCyc"/>
</dbReference>
<dbReference type="GO" id="GO:0046187">
    <property type="term" value="P:acetaldehyde catabolic process"/>
    <property type="evidence" value="ECO:0000314"/>
    <property type="project" value="EcoliWiki"/>
</dbReference>
<dbReference type="GO" id="GO:0006974">
    <property type="term" value="P:DNA damage response"/>
    <property type="evidence" value="ECO:0000270"/>
    <property type="project" value="EcoliWiki"/>
</dbReference>
<dbReference type="GO" id="GO:0045471">
    <property type="term" value="P:response to ethanol"/>
    <property type="evidence" value="ECO:0000270"/>
    <property type="project" value="EcoliWiki"/>
</dbReference>
<dbReference type="CDD" id="cd08297">
    <property type="entry name" value="CAD3"/>
    <property type="match status" value="1"/>
</dbReference>
<dbReference type="FunFam" id="3.40.50.720:FF:000039">
    <property type="entry name" value="Alcohol dehydrogenase AdhP"/>
    <property type="match status" value="1"/>
</dbReference>
<dbReference type="FunFam" id="3.90.180.10:FF:000002">
    <property type="entry name" value="Alcohol dehydrogenase AdhP"/>
    <property type="match status" value="1"/>
</dbReference>
<dbReference type="Gene3D" id="3.90.180.10">
    <property type="entry name" value="Medium-chain alcohol dehydrogenases, catalytic domain"/>
    <property type="match status" value="1"/>
</dbReference>
<dbReference type="Gene3D" id="3.40.50.720">
    <property type="entry name" value="NAD(P)-binding Rossmann-like Domain"/>
    <property type="match status" value="1"/>
</dbReference>
<dbReference type="InterPro" id="IPR013149">
    <property type="entry name" value="ADH-like_C"/>
</dbReference>
<dbReference type="InterPro" id="IPR013154">
    <property type="entry name" value="ADH-like_N"/>
</dbReference>
<dbReference type="InterPro" id="IPR002328">
    <property type="entry name" value="ADH_Zn_CS"/>
</dbReference>
<dbReference type="InterPro" id="IPR011032">
    <property type="entry name" value="GroES-like_sf"/>
</dbReference>
<dbReference type="InterPro" id="IPR036291">
    <property type="entry name" value="NAD(P)-bd_dom_sf"/>
</dbReference>
<dbReference type="InterPro" id="IPR020843">
    <property type="entry name" value="PKS_ER"/>
</dbReference>
<dbReference type="NCBIfam" id="NF006940">
    <property type="entry name" value="PRK09422.1"/>
    <property type="match status" value="1"/>
</dbReference>
<dbReference type="PANTHER" id="PTHR42940">
    <property type="entry name" value="ALCOHOL DEHYDROGENASE 1-RELATED"/>
    <property type="match status" value="1"/>
</dbReference>
<dbReference type="PANTHER" id="PTHR42940:SF8">
    <property type="entry name" value="VACUOLAR PROTEIN SORTING-ASSOCIATED PROTEIN 11"/>
    <property type="match status" value="1"/>
</dbReference>
<dbReference type="Pfam" id="PF08240">
    <property type="entry name" value="ADH_N"/>
    <property type="match status" value="1"/>
</dbReference>
<dbReference type="Pfam" id="PF00107">
    <property type="entry name" value="ADH_zinc_N"/>
    <property type="match status" value="1"/>
</dbReference>
<dbReference type="SMART" id="SM00829">
    <property type="entry name" value="PKS_ER"/>
    <property type="match status" value="1"/>
</dbReference>
<dbReference type="SUPFAM" id="SSF50129">
    <property type="entry name" value="GroES-like"/>
    <property type="match status" value="1"/>
</dbReference>
<dbReference type="SUPFAM" id="SSF51735">
    <property type="entry name" value="NAD(P)-binding Rossmann-fold domains"/>
    <property type="match status" value="1"/>
</dbReference>
<dbReference type="PROSITE" id="PS00059">
    <property type="entry name" value="ADH_ZINC"/>
    <property type="match status" value="1"/>
</dbReference>
<name>ADHP_ECOLI</name>
<reference key="1">
    <citation type="journal article" date="1996" name="DNA Res.">
        <title>A 570-kb DNA sequence of the Escherichia coli K-12 genome corresponding to the 28.0-40.1 min region on the linkage map.</title>
        <authorList>
            <person name="Aiba H."/>
            <person name="Baba T."/>
            <person name="Fujita K."/>
            <person name="Hayashi K."/>
            <person name="Inada T."/>
            <person name="Isono K."/>
            <person name="Itoh T."/>
            <person name="Kasai H."/>
            <person name="Kashimoto K."/>
            <person name="Kimura S."/>
            <person name="Kitakawa M."/>
            <person name="Kitagawa M."/>
            <person name="Makino K."/>
            <person name="Miki T."/>
            <person name="Mizobuchi K."/>
            <person name="Mori H."/>
            <person name="Mori T."/>
            <person name="Motomura K."/>
            <person name="Nakade S."/>
            <person name="Nakamura Y."/>
            <person name="Nashimoto H."/>
            <person name="Nishio Y."/>
            <person name="Oshima T."/>
            <person name="Saito N."/>
            <person name="Sampei G."/>
            <person name="Seki Y."/>
            <person name="Sivasundaram S."/>
            <person name="Tagami H."/>
            <person name="Takeda J."/>
            <person name="Takemoto K."/>
            <person name="Takeuchi Y."/>
            <person name="Wada C."/>
            <person name="Yamamoto Y."/>
            <person name="Horiuchi T."/>
        </authorList>
    </citation>
    <scope>NUCLEOTIDE SEQUENCE [LARGE SCALE GENOMIC DNA]</scope>
    <source>
        <strain>K12 / W3110 / ATCC 27325 / DSM 5911</strain>
    </source>
</reference>
<reference key="2">
    <citation type="journal article" date="1997" name="Science">
        <title>The complete genome sequence of Escherichia coli K-12.</title>
        <authorList>
            <person name="Blattner F.R."/>
            <person name="Plunkett G. III"/>
            <person name="Bloch C.A."/>
            <person name="Perna N.T."/>
            <person name="Burland V."/>
            <person name="Riley M."/>
            <person name="Collado-Vides J."/>
            <person name="Glasner J.D."/>
            <person name="Rode C.K."/>
            <person name="Mayhew G.F."/>
            <person name="Gregor J."/>
            <person name="Davis N.W."/>
            <person name="Kirkpatrick H.A."/>
            <person name="Goeden M.A."/>
            <person name="Rose D.J."/>
            <person name="Mau B."/>
            <person name="Shao Y."/>
        </authorList>
    </citation>
    <scope>NUCLEOTIDE SEQUENCE [LARGE SCALE GENOMIC DNA]</scope>
    <source>
        <strain>K12 / MG1655 / ATCC 47076</strain>
    </source>
</reference>
<reference key="3">
    <citation type="journal article" date="2006" name="Mol. Syst. Biol.">
        <title>Highly accurate genome sequences of Escherichia coli K-12 strains MG1655 and W3110.</title>
        <authorList>
            <person name="Hayashi K."/>
            <person name="Morooka N."/>
            <person name="Yamamoto Y."/>
            <person name="Fujita K."/>
            <person name="Isono K."/>
            <person name="Choi S."/>
            <person name="Ohtsubo E."/>
            <person name="Baba T."/>
            <person name="Wanner B.L."/>
            <person name="Mori H."/>
            <person name="Horiuchi T."/>
        </authorList>
    </citation>
    <scope>NUCLEOTIDE SEQUENCE [LARGE SCALE GENOMIC DNA]</scope>
    <source>
        <strain>K12 / W3110 / ATCC 27325 / DSM 5911</strain>
    </source>
</reference>
<reference key="4">
    <citation type="submission" date="1994-10" db="UniProtKB">
        <authorList>
            <person name="Harayama S."/>
        </authorList>
    </citation>
    <scope>PROTEIN SEQUENCE OF 1-35</scope>
    <scope>CHARACTERIZATION</scope>
</reference>
<reference key="5">
    <citation type="journal article" date="1990" name="J. Bacteriol.">
        <title>Bacterial transposon Tn7 utilizes two different classes of target sites.</title>
        <authorList>
            <person name="Kubo K.M."/>
            <person name="Craig N.L."/>
        </authorList>
    </citation>
    <scope>NUCLEOTIDE SEQUENCE [GENOMIC DNA] OF 87-118</scope>
</reference>
<evidence type="ECO:0000250" key="1"/>
<evidence type="ECO:0000305" key="2"/>
<evidence type="ECO:0007829" key="3">
    <source>
        <dbReference type="PDB" id="4GKV"/>
    </source>
</evidence>
<protein>
    <recommendedName>
        <fullName>Alcohol dehydrogenase, propanol-preferring</fullName>
        <ecNumber>1.1.1.1</ecNumber>
    </recommendedName>
</protein>
<keyword id="KW-0002">3D-structure</keyword>
<keyword id="KW-0903">Direct protein sequencing</keyword>
<keyword id="KW-0479">Metal-binding</keyword>
<keyword id="KW-0520">NAD</keyword>
<keyword id="KW-0560">Oxidoreductase</keyword>
<keyword id="KW-1185">Reference proteome</keyword>
<keyword id="KW-0862">Zinc</keyword>
<sequence>MKAAVVTKDHHVDVTYKTLRSLKHGEALLKMECCGVCHTDLHVKNGDFGDKTGVILGHEGIGVVAEVGPGVTSLKPGDRASVAWFYEGCGHCEYCNSGNETLCRSVKNAGYSVDGGMAEECIVVADYAVKVPDGLDSAAASSITCAGVTTYKAVKLSKIRPGQWIAIYGLGGLGNLALQYAKNVFNAKVIAIDVNDEQLKLATEMGADLAINSHTEDAAKIVQEKTGGAHAAVVTAVAKAAFNSAVDAVRAGGRVVAVGLPPESMSLDIPRLVLDGIEVVGSLVGTRQDLTEAFQFAAEGKVVPKVALRPLADINTIFTEMEEGKIRGRMVIDFRH</sequence>
<gene>
    <name type="primary">adhP</name>
    <name type="synonym">yddN</name>
    <name type="ordered locus">b1478</name>
    <name type="ordered locus">JW1474</name>
</gene>
<organism>
    <name type="scientific">Escherichia coli (strain K12)</name>
    <dbReference type="NCBI Taxonomy" id="83333"/>
    <lineage>
        <taxon>Bacteria</taxon>
        <taxon>Pseudomonadati</taxon>
        <taxon>Pseudomonadota</taxon>
        <taxon>Gammaproteobacteria</taxon>
        <taxon>Enterobacterales</taxon>
        <taxon>Enterobacteriaceae</taxon>
        <taxon>Escherichia</taxon>
    </lineage>
</organism>
<comment type="function">
    <text>Preferred specificity is towards 1-propanol.</text>
</comment>
<comment type="catalytic activity">
    <reaction>
        <text>a primary alcohol + NAD(+) = an aldehyde + NADH + H(+)</text>
        <dbReference type="Rhea" id="RHEA:10736"/>
        <dbReference type="ChEBI" id="CHEBI:15378"/>
        <dbReference type="ChEBI" id="CHEBI:15734"/>
        <dbReference type="ChEBI" id="CHEBI:17478"/>
        <dbReference type="ChEBI" id="CHEBI:57540"/>
        <dbReference type="ChEBI" id="CHEBI:57945"/>
        <dbReference type="EC" id="1.1.1.1"/>
    </reaction>
</comment>
<comment type="catalytic activity">
    <reaction>
        <text>a secondary alcohol + NAD(+) = a ketone + NADH + H(+)</text>
        <dbReference type="Rhea" id="RHEA:10740"/>
        <dbReference type="ChEBI" id="CHEBI:15378"/>
        <dbReference type="ChEBI" id="CHEBI:17087"/>
        <dbReference type="ChEBI" id="CHEBI:35681"/>
        <dbReference type="ChEBI" id="CHEBI:57540"/>
        <dbReference type="ChEBI" id="CHEBI:57945"/>
        <dbReference type="EC" id="1.1.1.1"/>
    </reaction>
</comment>
<comment type="cofactor">
    <cofactor evidence="1">
        <name>Zn(2+)</name>
        <dbReference type="ChEBI" id="CHEBI:29105"/>
    </cofactor>
    <text evidence="1">Binds 2 Zn(2+) ions per subunit.</text>
</comment>
<comment type="similarity">
    <text evidence="2">Belongs to the zinc-containing alcohol dehydrogenase family.</text>
</comment>